<sequence>MSRLFQKEDDIVALATPFFSSALCVIRSSGVSAIEKFSTMFSDPSKLLEASGHTIHYGYILDNETKEKLDEVVVCLYRAPKSFTGQDSIEVMAHGSLIGIRRIIDFFLKVGFRMAEPGEFTLRSFLAGKLDLTKAEAINELISAKTRQVHALAVNKLSGSLFDKIDLIKKDILNFLSAISVYLDYETDDNEVVIPVDIILKSKSELERLIDSYDTARKLENGVTLVLAGSVNVGKSSLFNLLLKEDRAIVSSYAGTTRDYIQASFEFDGILFNVFDTAGLRETSDFVEQLGIVRSNSLIKEASLIFYVVDLSGKLTDDDLKFIDAYKEDSRVLFVLNKVDLEQNNQTVEFFNSNDIVSLNTVKISTKTLFGINSLYDRIRSFIAVDYMKTSDYDIVISSTRQAALLKRAYALIIELLSKIEQNISYDMLAFDVYEVVNVLGEITGEVTSDDVLNNMFKNFCLGK</sequence>
<reference key="1">
    <citation type="journal article" date="2008" name="PLoS Genet.">
        <title>The genome of Borrelia recurrentis, the agent of deadly louse-borne relapsing fever, is a degraded subset of tick-borne Borrelia duttonii.</title>
        <authorList>
            <person name="Lescot M."/>
            <person name="Audic S."/>
            <person name="Robert C."/>
            <person name="Nguyen T.T."/>
            <person name="Blanc G."/>
            <person name="Cutler S.J."/>
            <person name="Wincker P."/>
            <person name="Couloux A."/>
            <person name="Claverie J.-M."/>
            <person name="Raoult D."/>
            <person name="Drancourt M."/>
        </authorList>
    </citation>
    <scope>NUCLEOTIDE SEQUENCE [LARGE SCALE GENOMIC DNA]</scope>
    <source>
        <strain>A1</strain>
    </source>
</reference>
<comment type="function">
    <text evidence="1">Exhibits a very high intrinsic GTPase hydrolysis rate. Involved in the addition of a carboxymethylaminomethyl (cmnm) group at the wobble position (U34) of certain tRNAs, forming tRNA-cmnm(5)s(2)U34.</text>
</comment>
<comment type="cofactor">
    <cofactor evidence="1">
        <name>K(+)</name>
        <dbReference type="ChEBI" id="CHEBI:29103"/>
    </cofactor>
    <text evidence="1">Binds 1 potassium ion per subunit.</text>
</comment>
<comment type="subunit">
    <text evidence="1">Homodimer. Heterotetramer of two MnmE and two MnmG subunits.</text>
</comment>
<comment type="subcellular location">
    <subcellularLocation>
        <location evidence="1">Cytoplasm</location>
    </subcellularLocation>
</comment>
<comment type="similarity">
    <text evidence="1">Belongs to the TRAFAC class TrmE-Era-EngA-EngB-Septin-like GTPase superfamily. TrmE GTPase family.</text>
</comment>
<evidence type="ECO:0000255" key="1">
    <source>
        <dbReference type="HAMAP-Rule" id="MF_00379"/>
    </source>
</evidence>
<gene>
    <name evidence="1" type="primary">mnmE</name>
    <name evidence="1" type="synonym">trmE</name>
    <name type="ordered locus">BRE_177</name>
</gene>
<keyword id="KW-0963">Cytoplasm</keyword>
<keyword id="KW-0342">GTP-binding</keyword>
<keyword id="KW-0378">Hydrolase</keyword>
<keyword id="KW-0460">Magnesium</keyword>
<keyword id="KW-0479">Metal-binding</keyword>
<keyword id="KW-0547">Nucleotide-binding</keyword>
<keyword id="KW-0630">Potassium</keyword>
<keyword id="KW-0819">tRNA processing</keyword>
<organism>
    <name type="scientific">Borrelia recurrentis (strain A1)</name>
    <dbReference type="NCBI Taxonomy" id="412418"/>
    <lineage>
        <taxon>Bacteria</taxon>
        <taxon>Pseudomonadati</taxon>
        <taxon>Spirochaetota</taxon>
        <taxon>Spirochaetia</taxon>
        <taxon>Spirochaetales</taxon>
        <taxon>Borreliaceae</taxon>
        <taxon>Borrelia</taxon>
    </lineage>
</organism>
<feature type="chain" id="PRO_1000122111" description="tRNA modification GTPase MnmE">
    <location>
        <begin position="1"/>
        <end position="464"/>
    </location>
</feature>
<feature type="domain" description="TrmE-type G">
    <location>
        <begin position="222"/>
        <end position="384"/>
    </location>
</feature>
<feature type="binding site" evidence="1">
    <location>
        <position position="27"/>
    </location>
    <ligand>
        <name>(6S)-5-formyl-5,6,7,8-tetrahydrofolate</name>
        <dbReference type="ChEBI" id="CHEBI:57457"/>
    </ligand>
</feature>
<feature type="binding site" evidence="1">
    <location>
        <position position="90"/>
    </location>
    <ligand>
        <name>(6S)-5-formyl-5,6,7,8-tetrahydrofolate</name>
        <dbReference type="ChEBI" id="CHEBI:57457"/>
    </ligand>
</feature>
<feature type="binding site" evidence="1">
    <location>
        <position position="129"/>
    </location>
    <ligand>
        <name>(6S)-5-formyl-5,6,7,8-tetrahydrofolate</name>
        <dbReference type="ChEBI" id="CHEBI:57457"/>
    </ligand>
</feature>
<feature type="binding site" evidence="1">
    <location>
        <begin position="232"/>
        <end position="237"/>
    </location>
    <ligand>
        <name>GTP</name>
        <dbReference type="ChEBI" id="CHEBI:37565"/>
    </ligand>
</feature>
<feature type="binding site" evidence="1">
    <location>
        <position position="236"/>
    </location>
    <ligand>
        <name>Mg(2+)</name>
        <dbReference type="ChEBI" id="CHEBI:18420"/>
    </ligand>
</feature>
<feature type="binding site" evidence="1">
    <location>
        <begin position="251"/>
        <end position="257"/>
    </location>
    <ligand>
        <name>GTP</name>
        <dbReference type="ChEBI" id="CHEBI:37565"/>
    </ligand>
</feature>
<feature type="binding site" evidence="1">
    <location>
        <position position="251"/>
    </location>
    <ligand>
        <name>K(+)</name>
        <dbReference type="ChEBI" id="CHEBI:29103"/>
    </ligand>
</feature>
<feature type="binding site" evidence="1">
    <location>
        <position position="257"/>
    </location>
    <ligand>
        <name>Mg(2+)</name>
        <dbReference type="ChEBI" id="CHEBI:18420"/>
    </ligand>
</feature>
<feature type="binding site" evidence="1">
    <location>
        <begin position="276"/>
        <end position="279"/>
    </location>
    <ligand>
        <name>GTP</name>
        <dbReference type="ChEBI" id="CHEBI:37565"/>
    </ligand>
</feature>
<feature type="binding site" evidence="1">
    <location>
        <position position="464"/>
    </location>
    <ligand>
        <name>(6S)-5-formyl-5,6,7,8-tetrahydrofolate</name>
        <dbReference type="ChEBI" id="CHEBI:57457"/>
    </ligand>
</feature>
<accession>B5RQZ8</accession>
<proteinExistence type="inferred from homology"/>
<name>MNME_BORRA</name>
<protein>
    <recommendedName>
        <fullName evidence="1">tRNA modification GTPase MnmE</fullName>
        <ecNumber evidence="1">3.6.-.-</ecNumber>
    </recommendedName>
</protein>
<dbReference type="EC" id="3.6.-.-" evidence="1"/>
<dbReference type="EMBL" id="CP000993">
    <property type="protein sequence ID" value="ACH94432.1"/>
    <property type="molecule type" value="Genomic_DNA"/>
</dbReference>
<dbReference type="RefSeq" id="WP_012538714.1">
    <property type="nucleotide sequence ID" value="NC_011244.1"/>
</dbReference>
<dbReference type="SMR" id="B5RQZ8"/>
<dbReference type="KEGG" id="bre:BRE_177"/>
<dbReference type="HOGENOM" id="CLU_019624_4_1_12"/>
<dbReference type="Proteomes" id="UP000000612">
    <property type="component" value="Chromosome"/>
</dbReference>
<dbReference type="GO" id="GO:0005829">
    <property type="term" value="C:cytosol"/>
    <property type="evidence" value="ECO:0007669"/>
    <property type="project" value="TreeGrafter"/>
</dbReference>
<dbReference type="GO" id="GO:0005525">
    <property type="term" value="F:GTP binding"/>
    <property type="evidence" value="ECO:0007669"/>
    <property type="project" value="UniProtKB-UniRule"/>
</dbReference>
<dbReference type="GO" id="GO:0003924">
    <property type="term" value="F:GTPase activity"/>
    <property type="evidence" value="ECO:0007669"/>
    <property type="project" value="UniProtKB-UniRule"/>
</dbReference>
<dbReference type="GO" id="GO:0046872">
    <property type="term" value="F:metal ion binding"/>
    <property type="evidence" value="ECO:0007669"/>
    <property type="project" value="UniProtKB-KW"/>
</dbReference>
<dbReference type="GO" id="GO:0030488">
    <property type="term" value="P:tRNA methylation"/>
    <property type="evidence" value="ECO:0007669"/>
    <property type="project" value="TreeGrafter"/>
</dbReference>
<dbReference type="GO" id="GO:0002098">
    <property type="term" value="P:tRNA wobble uridine modification"/>
    <property type="evidence" value="ECO:0007669"/>
    <property type="project" value="TreeGrafter"/>
</dbReference>
<dbReference type="CDD" id="cd04164">
    <property type="entry name" value="trmE"/>
    <property type="match status" value="1"/>
</dbReference>
<dbReference type="CDD" id="cd14858">
    <property type="entry name" value="TrmE_N"/>
    <property type="match status" value="1"/>
</dbReference>
<dbReference type="Gene3D" id="3.40.50.300">
    <property type="entry name" value="P-loop containing nucleotide triphosphate hydrolases"/>
    <property type="match status" value="1"/>
</dbReference>
<dbReference type="Gene3D" id="3.30.1360.120">
    <property type="entry name" value="Probable tRNA modification gtpase trme, domain 1"/>
    <property type="match status" value="1"/>
</dbReference>
<dbReference type="Gene3D" id="1.20.120.430">
    <property type="entry name" value="tRNA modification GTPase MnmE domain 2"/>
    <property type="match status" value="1"/>
</dbReference>
<dbReference type="HAMAP" id="MF_00379">
    <property type="entry name" value="GTPase_MnmE"/>
    <property type="match status" value="1"/>
</dbReference>
<dbReference type="InterPro" id="IPR031168">
    <property type="entry name" value="G_TrmE"/>
</dbReference>
<dbReference type="InterPro" id="IPR006073">
    <property type="entry name" value="GTP-bd"/>
</dbReference>
<dbReference type="InterPro" id="IPR018948">
    <property type="entry name" value="GTP-bd_TrmE_N"/>
</dbReference>
<dbReference type="InterPro" id="IPR004520">
    <property type="entry name" value="GTPase_MnmE"/>
</dbReference>
<dbReference type="InterPro" id="IPR027368">
    <property type="entry name" value="MnmE_dom2"/>
</dbReference>
<dbReference type="InterPro" id="IPR025867">
    <property type="entry name" value="MnmE_helical"/>
</dbReference>
<dbReference type="InterPro" id="IPR027417">
    <property type="entry name" value="P-loop_NTPase"/>
</dbReference>
<dbReference type="InterPro" id="IPR005225">
    <property type="entry name" value="Small_GTP-bd"/>
</dbReference>
<dbReference type="InterPro" id="IPR027266">
    <property type="entry name" value="TrmE/GcvT_dom1"/>
</dbReference>
<dbReference type="NCBIfam" id="TIGR00450">
    <property type="entry name" value="mnmE_trmE_thdF"/>
    <property type="match status" value="1"/>
</dbReference>
<dbReference type="NCBIfam" id="TIGR00231">
    <property type="entry name" value="small_GTP"/>
    <property type="match status" value="1"/>
</dbReference>
<dbReference type="PANTHER" id="PTHR42714">
    <property type="entry name" value="TRNA MODIFICATION GTPASE GTPBP3"/>
    <property type="match status" value="1"/>
</dbReference>
<dbReference type="PANTHER" id="PTHR42714:SF2">
    <property type="entry name" value="TRNA MODIFICATION GTPASE GTPBP3, MITOCHONDRIAL"/>
    <property type="match status" value="1"/>
</dbReference>
<dbReference type="Pfam" id="PF01926">
    <property type="entry name" value="MMR_HSR1"/>
    <property type="match status" value="1"/>
</dbReference>
<dbReference type="Pfam" id="PF12631">
    <property type="entry name" value="MnmE_helical"/>
    <property type="match status" value="1"/>
</dbReference>
<dbReference type="Pfam" id="PF10396">
    <property type="entry name" value="TrmE_N"/>
    <property type="match status" value="1"/>
</dbReference>
<dbReference type="SUPFAM" id="SSF52540">
    <property type="entry name" value="P-loop containing nucleoside triphosphate hydrolases"/>
    <property type="match status" value="1"/>
</dbReference>
<dbReference type="SUPFAM" id="SSF116878">
    <property type="entry name" value="TrmE connector domain"/>
    <property type="match status" value="1"/>
</dbReference>
<dbReference type="PROSITE" id="PS51709">
    <property type="entry name" value="G_TRME"/>
    <property type="match status" value="1"/>
</dbReference>